<feature type="chain" id="PRO_0000054074" description="Voltage-gated potassium channel regulatory subunit KCNG2">
    <location>
        <begin position="1"/>
        <end position="466"/>
    </location>
</feature>
<feature type="topological domain" description="Cytoplasmic" evidence="1">
    <location>
        <begin position="1"/>
        <end position="174"/>
    </location>
</feature>
<feature type="transmembrane region" description="Helical; Name=Segment S1" evidence="1">
    <location>
        <begin position="175"/>
        <end position="196"/>
    </location>
</feature>
<feature type="topological domain" description="Extracellular" evidence="1">
    <location>
        <begin position="197"/>
        <end position="217"/>
    </location>
</feature>
<feature type="transmembrane region" description="Helical; Name=Segment S2" evidence="1">
    <location>
        <begin position="218"/>
        <end position="239"/>
    </location>
</feature>
<feature type="topological domain" description="Cytoplasmic" evidence="1">
    <location>
        <begin position="240"/>
        <end position="250"/>
    </location>
</feature>
<feature type="transmembrane region" description="Helical; Name=Segment S3" evidence="1">
    <location>
        <begin position="251"/>
        <end position="271"/>
    </location>
</feature>
<feature type="topological domain" description="Extracellular" evidence="1">
    <location>
        <begin position="272"/>
        <end position="283"/>
    </location>
</feature>
<feature type="transmembrane region" description="Helical; Voltage-sensor; Name=Segment S4" evidence="1">
    <location>
        <begin position="284"/>
        <end position="304"/>
    </location>
</feature>
<feature type="topological domain" description="Cytoplasmic" evidence="1">
    <location>
        <begin position="305"/>
        <end position="319"/>
    </location>
</feature>
<feature type="transmembrane region" description="Helical; Name=Segment S5" evidence="1">
    <location>
        <begin position="320"/>
        <end position="341"/>
    </location>
</feature>
<feature type="topological domain" description="Extracellular" evidence="1">
    <location>
        <begin position="342"/>
        <end position="356"/>
    </location>
</feature>
<feature type="intramembrane region" description="Helical; Name=Pore helix" evidence="1">
    <location>
        <begin position="357"/>
        <end position="368"/>
    </location>
</feature>
<feature type="intramembrane region" evidence="1">
    <location>
        <begin position="369"/>
        <end position="376"/>
    </location>
</feature>
<feature type="topological domain" description="Extracellular" evidence="1">
    <location>
        <begin position="377"/>
        <end position="383"/>
    </location>
</feature>
<feature type="transmembrane region" description="Helical; Name=Segment S6" evidence="1">
    <location>
        <begin position="384"/>
        <end position="412"/>
    </location>
</feature>
<feature type="topological domain" description="Cytoplasmic" evidence="1">
    <location>
        <begin position="413"/>
        <end position="466"/>
    </location>
</feature>
<feature type="region of interest" description="Disordered" evidence="3">
    <location>
        <begin position="131"/>
        <end position="155"/>
    </location>
</feature>
<feature type="region of interest" description="Disordered" evidence="3">
    <location>
        <begin position="416"/>
        <end position="466"/>
    </location>
</feature>
<feature type="short sequence motif" description="Selectivity filter" evidence="1">
    <location>
        <begin position="369"/>
        <end position="374"/>
    </location>
</feature>
<feature type="compositionally biased region" description="Polar residues" evidence="3">
    <location>
        <begin position="435"/>
        <end position="447"/>
    </location>
</feature>
<feature type="compositionally biased region" description="Low complexity" evidence="3">
    <location>
        <begin position="448"/>
        <end position="460"/>
    </location>
</feature>
<name>KCNG2_HUMAN</name>
<comment type="function">
    <text evidence="4 7">Regulatory alpha-subunit of the voltage-gated potassium (Kv) channel which, when coassembled with KCNB1, can modulate the kinetics and conductance-voltage relationship (PubMed:10551266). Modulates channel activity by shifting the threshold and the half-maximal activation to more negative values (Probable). Potassium channel subunit that does not form functional channels by itself (Probable).</text>
</comment>
<comment type="subunit">
    <text evidence="7">Heterodimer with KCNB1.</text>
</comment>
<comment type="subcellular location">
    <subcellularLocation>
        <location evidence="2">Cell membrane</location>
        <topology evidence="1">Multi-pass membrane protein</topology>
    </subcellularLocation>
</comment>
<comment type="tissue specificity">
    <text evidence="4">Highly expressed in heart, liver, skeletal muscle, kidney and pancreas. Detected at low levels in brain, lung and placenta.</text>
</comment>
<comment type="miscellaneous">
    <text evidence="4">Heterodimers with KCNB1 are highly sensitive to inhibition by tetraethylammonium (TEA) and propafenone.</text>
</comment>
<comment type="similarity">
    <text evidence="6">Belongs to the potassium channel family. G (TC 1.A.1.2) subfamily. Kv6.2/KCNG2 sub-subfamily.</text>
</comment>
<protein>
    <recommendedName>
        <fullName evidence="6">Voltage-gated potassium channel regulatory subunit KCNG2</fullName>
    </recommendedName>
    <alternativeName>
        <fullName>Cardiac potassium channel subunit</fullName>
    </alternativeName>
    <alternativeName>
        <fullName>Potassium voltage-gated channel subfamily G member 2</fullName>
    </alternativeName>
    <alternativeName>
        <fullName>Voltage-gated potassium channel subunit Kv6.2</fullName>
    </alternativeName>
</protein>
<proteinExistence type="evidence at protein level"/>
<dbReference type="EMBL" id="AJ011021">
    <property type="protein sequence ID" value="CAB56834.1"/>
    <property type="molecule type" value="mRNA"/>
</dbReference>
<dbReference type="CCDS" id="CCDS12019.1"/>
<dbReference type="RefSeq" id="NP_036415.1">
    <property type="nucleotide sequence ID" value="NM_012283.2"/>
</dbReference>
<dbReference type="RefSeq" id="XP_011524220.1">
    <property type="nucleotide sequence ID" value="XM_011525918.2"/>
</dbReference>
<dbReference type="RefSeq" id="XP_011524222.1">
    <property type="nucleotide sequence ID" value="XM_011525920.2"/>
</dbReference>
<dbReference type="RefSeq" id="XP_016881194.1">
    <property type="nucleotide sequence ID" value="XM_017025705.1"/>
</dbReference>
<dbReference type="SMR" id="Q9UJ96"/>
<dbReference type="BioGRID" id="117638">
    <property type="interactions" value="2"/>
</dbReference>
<dbReference type="CORUM" id="Q9UJ96"/>
<dbReference type="FunCoup" id="Q9UJ96">
    <property type="interactions" value="10"/>
</dbReference>
<dbReference type="STRING" id="9606.ENSP00000315654"/>
<dbReference type="ChEMBL" id="CHEMBL2362996"/>
<dbReference type="DrugBank" id="DB00228">
    <property type="generic name" value="Enflurane"/>
</dbReference>
<dbReference type="DrugBank" id="DB01110">
    <property type="generic name" value="Miconazole"/>
</dbReference>
<dbReference type="DrugBank" id="DB01069">
    <property type="generic name" value="Promethazine"/>
</dbReference>
<dbReference type="DrugCentral" id="Q9UJ96"/>
<dbReference type="GlyGen" id="Q9UJ96">
    <property type="glycosylation" value="1 site"/>
</dbReference>
<dbReference type="iPTMnet" id="Q9UJ96"/>
<dbReference type="PhosphoSitePlus" id="Q9UJ96"/>
<dbReference type="BioMuta" id="KCNG2"/>
<dbReference type="DMDM" id="24418480"/>
<dbReference type="MassIVE" id="Q9UJ96"/>
<dbReference type="PaxDb" id="9606-ENSP00000315654"/>
<dbReference type="PeptideAtlas" id="Q9UJ96"/>
<dbReference type="Antibodypedia" id="59003">
    <property type="antibodies" value="140 antibodies from 21 providers"/>
</dbReference>
<dbReference type="DNASU" id="26251"/>
<dbReference type="Ensembl" id="ENST00000316249.4">
    <property type="protein sequence ID" value="ENSP00000315654.3"/>
    <property type="gene ID" value="ENSG00000178342.5"/>
</dbReference>
<dbReference type="GeneID" id="26251"/>
<dbReference type="KEGG" id="hsa:26251"/>
<dbReference type="MANE-Select" id="ENST00000316249.4">
    <property type="protein sequence ID" value="ENSP00000315654.3"/>
    <property type="RefSeq nucleotide sequence ID" value="NM_012283.2"/>
    <property type="RefSeq protein sequence ID" value="NP_036415.1"/>
</dbReference>
<dbReference type="UCSC" id="uc010xfl.2">
    <property type="organism name" value="human"/>
</dbReference>
<dbReference type="AGR" id="HGNC:6249"/>
<dbReference type="CTD" id="26251"/>
<dbReference type="DisGeNET" id="26251"/>
<dbReference type="GeneCards" id="KCNG2"/>
<dbReference type="HGNC" id="HGNC:6249">
    <property type="gene designation" value="KCNG2"/>
</dbReference>
<dbReference type="HPA" id="ENSG00000178342">
    <property type="expression patterns" value="Tissue enhanced (brain)"/>
</dbReference>
<dbReference type="MIM" id="605696">
    <property type="type" value="gene"/>
</dbReference>
<dbReference type="neXtProt" id="NX_Q9UJ96"/>
<dbReference type="OpenTargets" id="ENSG00000178342"/>
<dbReference type="PharmGKB" id="PA30035"/>
<dbReference type="VEuPathDB" id="HostDB:ENSG00000178342"/>
<dbReference type="eggNOG" id="KOG3713">
    <property type="taxonomic scope" value="Eukaryota"/>
</dbReference>
<dbReference type="GeneTree" id="ENSGT00940000160858"/>
<dbReference type="HOGENOM" id="CLU_011722_4_1_1"/>
<dbReference type="InParanoid" id="Q9UJ96"/>
<dbReference type="OMA" id="FEREMVF"/>
<dbReference type="OrthoDB" id="296522at2759"/>
<dbReference type="PAN-GO" id="Q9UJ96">
    <property type="GO annotations" value="4 GO annotations based on evolutionary models"/>
</dbReference>
<dbReference type="PhylomeDB" id="Q9UJ96"/>
<dbReference type="TreeFam" id="TF313103"/>
<dbReference type="PathwayCommons" id="Q9UJ96"/>
<dbReference type="Reactome" id="R-HSA-1296072">
    <property type="pathway name" value="Voltage gated Potassium channels"/>
</dbReference>
<dbReference type="Reactome" id="R-HSA-381676">
    <property type="pathway name" value="Glucagon-like Peptide-1 (GLP1) regulates insulin secretion"/>
</dbReference>
<dbReference type="SignaLink" id="Q9UJ96"/>
<dbReference type="BioGRID-ORCS" id="26251">
    <property type="hits" value="15 hits in 1140 CRISPR screens"/>
</dbReference>
<dbReference type="ChiTaRS" id="KCNG2">
    <property type="organism name" value="human"/>
</dbReference>
<dbReference type="GeneWiki" id="KCNG2"/>
<dbReference type="GenomeRNAi" id="26251"/>
<dbReference type="Pharos" id="Q9UJ96">
    <property type="development level" value="Tclin"/>
</dbReference>
<dbReference type="PRO" id="PR:Q9UJ96"/>
<dbReference type="Proteomes" id="UP000005640">
    <property type="component" value="Chromosome 18"/>
</dbReference>
<dbReference type="RNAct" id="Q9UJ96">
    <property type="molecule type" value="protein"/>
</dbReference>
<dbReference type="Bgee" id="ENSG00000178342">
    <property type="expression patterns" value="Expressed in sural nerve and 85 other cell types or tissues"/>
</dbReference>
<dbReference type="GO" id="GO:0070062">
    <property type="term" value="C:extracellular exosome"/>
    <property type="evidence" value="ECO:0007005"/>
    <property type="project" value="UniProtKB"/>
</dbReference>
<dbReference type="GO" id="GO:0016020">
    <property type="term" value="C:membrane"/>
    <property type="evidence" value="ECO:0000318"/>
    <property type="project" value="GO_Central"/>
</dbReference>
<dbReference type="GO" id="GO:0005886">
    <property type="term" value="C:plasma membrane"/>
    <property type="evidence" value="ECO:0000304"/>
    <property type="project" value="Reactome"/>
</dbReference>
<dbReference type="GO" id="GO:0008076">
    <property type="term" value="C:voltage-gated potassium channel complex"/>
    <property type="evidence" value="ECO:0000318"/>
    <property type="project" value="GO_Central"/>
</dbReference>
<dbReference type="GO" id="GO:0015459">
    <property type="term" value="F:potassium channel regulator activity"/>
    <property type="evidence" value="ECO:0000250"/>
    <property type="project" value="UniProtKB"/>
</dbReference>
<dbReference type="GO" id="GO:0005249">
    <property type="term" value="F:voltage-gated potassium channel activity"/>
    <property type="evidence" value="ECO:0007669"/>
    <property type="project" value="InterPro"/>
</dbReference>
<dbReference type="GO" id="GO:0001508">
    <property type="term" value="P:action potential"/>
    <property type="evidence" value="ECO:0000318"/>
    <property type="project" value="GO_Central"/>
</dbReference>
<dbReference type="GO" id="GO:0071805">
    <property type="term" value="P:potassium ion transmembrane transport"/>
    <property type="evidence" value="ECO:0000318"/>
    <property type="project" value="GO_Central"/>
</dbReference>
<dbReference type="GO" id="GO:0051260">
    <property type="term" value="P:protein homooligomerization"/>
    <property type="evidence" value="ECO:0007669"/>
    <property type="project" value="InterPro"/>
</dbReference>
<dbReference type="GO" id="GO:0043266">
    <property type="term" value="P:regulation of potassium ion transport"/>
    <property type="evidence" value="ECO:0007669"/>
    <property type="project" value="Ensembl"/>
</dbReference>
<dbReference type="CDD" id="cd18382">
    <property type="entry name" value="BTB_POZ_Kv6_KCNG"/>
    <property type="match status" value="1"/>
</dbReference>
<dbReference type="FunFam" id="1.10.287.70:FF:000005">
    <property type="entry name" value="potassium voltage-gated channel subfamily G member 1"/>
    <property type="match status" value="1"/>
</dbReference>
<dbReference type="FunFam" id="1.20.120.350:FF:000085">
    <property type="entry name" value="potassium voltage-gated channel subfamily G member 2"/>
    <property type="match status" value="1"/>
</dbReference>
<dbReference type="FunFam" id="3.30.710.10:FF:000019">
    <property type="entry name" value="Potassium voltage-gated channel, subfamily G, member 1"/>
    <property type="match status" value="1"/>
</dbReference>
<dbReference type="Gene3D" id="1.10.287.70">
    <property type="match status" value="1"/>
</dbReference>
<dbReference type="Gene3D" id="3.30.710.10">
    <property type="entry name" value="Potassium Channel Kv1.1, Chain A"/>
    <property type="match status" value="1"/>
</dbReference>
<dbReference type="Gene3D" id="1.20.120.350">
    <property type="entry name" value="Voltage-gated potassium channels. Chain C"/>
    <property type="match status" value="1"/>
</dbReference>
<dbReference type="InterPro" id="IPR000210">
    <property type="entry name" value="BTB/POZ_dom"/>
</dbReference>
<dbReference type="InterPro" id="IPR005821">
    <property type="entry name" value="Ion_trans_dom"/>
</dbReference>
<dbReference type="InterPro" id="IPR003968">
    <property type="entry name" value="K_chnl_volt-dep_Kv"/>
</dbReference>
<dbReference type="InterPro" id="IPR003969">
    <property type="entry name" value="K_chnl_volt-dep_Kv6"/>
</dbReference>
<dbReference type="InterPro" id="IPR011333">
    <property type="entry name" value="SKP1/BTB/POZ_sf"/>
</dbReference>
<dbReference type="InterPro" id="IPR003131">
    <property type="entry name" value="T1-type_BTB"/>
</dbReference>
<dbReference type="InterPro" id="IPR028325">
    <property type="entry name" value="VG_K_chnl"/>
</dbReference>
<dbReference type="InterPro" id="IPR027359">
    <property type="entry name" value="Volt_channel_dom_sf"/>
</dbReference>
<dbReference type="PANTHER" id="PTHR11537:SF90">
    <property type="entry name" value="POTASSIUM VOLTAGE-GATED CHANNEL SUBFAMILY G MEMBER 2"/>
    <property type="match status" value="1"/>
</dbReference>
<dbReference type="PANTHER" id="PTHR11537">
    <property type="entry name" value="VOLTAGE-GATED POTASSIUM CHANNEL"/>
    <property type="match status" value="1"/>
</dbReference>
<dbReference type="Pfam" id="PF02214">
    <property type="entry name" value="BTB_2"/>
    <property type="match status" value="1"/>
</dbReference>
<dbReference type="Pfam" id="PF00520">
    <property type="entry name" value="Ion_trans"/>
    <property type="match status" value="1"/>
</dbReference>
<dbReference type="PRINTS" id="PR00169">
    <property type="entry name" value="KCHANNEL"/>
</dbReference>
<dbReference type="PRINTS" id="PR01492">
    <property type="entry name" value="KV6CHANNEL"/>
</dbReference>
<dbReference type="PRINTS" id="PR01491">
    <property type="entry name" value="KVCHANNEL"/>
</dbReference>
<dbReference type="SMART" id="SM00225">
    <property type="entry name" value="BTB"/>
    <property type="match status" value="1"/>
</dbReference>
<dbReference type="SUPFAM" id="SSF54695">
    <property type="entry name" value="POZ domain"/>
    <property type="match status" value="1"/>
</dbReference>
<dbReference type="SUPFAM" id="SSF81324">
    <property type="entry name" value="Voltage-gated potassium channels"/>
    <property type="match status" value="1"/>
</dbReference>
<evidence type="ECO:0000250" key="1">
    <source>
        <dbReference type="UniProtKB" id="P63142"/>
    </source>
</evidence>
<evidence type="ECO:0000250" key="2">
    <source>
        <dbReference type="UniProtKB" id="Q14721"/>
    </source>
</evidence>
<evidence type="ECO:0000256" key="3">
    <source>
        <dbReference type="SAM" id="MobiDB-lite"/>
    </source>
</evidence>
<evidence type="ECO:0000269" key="4">
    <source>
    </source>
</evidence>
<evidence type="ECO:0000303" key="5">
    <source>
    </source>
</evidence>
<evidence type="ECO:0000305" key="6"/>
<evidence type="ECO:0000305" key="7">
    <source>
    </source>
</evidence>
<evidence type="ECO:0000312" key="8">
    <source>
        <dbReference type="HGNC" id="HGNC:6249"/>
    </source>
</evidence>
<reference key="1">
    <citation type="journal article" date="1999" name="Recept. Channels">
        <title>Structural and functional characterization of Kv6.2, a new gamma-subunit of voltage-gated potassium channel.</title>
        <authorList>
            <person name="Zhu X.-R."/>
            <person name="Netzer R."/>
            <person name="Boehlke K."/>
            <person name="Liu Q."/>
            <person name="Pongs O."/>
        </authorList>
    </citation>
    <scope>NUCLEOTIDE SEQUENCE [MRNA]</scope>
    <scope>FUNCTION</scope>
    <scope>SUBUNIT</scope>
    <scope>TISSUE SPECIFICITY</scope>
</reference>
<accession>Q9UJ96</accession>
<organism>
    <name type="scientific">Homo sapiens</name>
    <name type="common">Human</name>
    <dbReference type="NCBI Taxonomy" id="9606"/>
    <lineage>
        <taxon>Eukaryota</taxon>
        <taxon>Metazoa</taxon>
        <taxon>Chordata</taxon>
        <taxon>Craniata</taxon>
        <taxon>Vertebrata</taxon>
        <taxon>Euteleostomi</taxon>
        <taxon>Mammalia</taxon>
        <taxon>Eutheria</taxon>
        <taxon>Euarchontoglires</taxon>
        <taxon>Primates</taxon>
        <taxon>Haplorrhini</taxon>
        <taxon>Catarrhini</taxon>
        <taxon>Hominidae</taxon>
        <taxon>Homo</taxon>
    </lineage>
</organism>
<keyword id="KW-1003">Cell membrane</keyword>
<keyword id="KW-0407">Ion channel</keyword>
<keyword id="KW-0406">Ion transport</keyword>
<keyword id="KW-0472">Membrane</keyword>
<keyword id="KW-0630">Potassium</keyword>
<keyword id="KW-0631">Potassium channel</keyword>
<keyword id="KW-0633">Potassium transport</keyword>
<keyword id="KW-1185">Reference proteome</keyword>
<keyword id="KW-0812">Transmembrane</keyword>
<keyword id="KW-1133">Transmembrane helix</keyword>
<keyword id="KW-0813">Transport</keyword>
<keyword id="KW-0851">Voltage-gated channel</keyword>
<sequence>MEPWPCSPGGGGGTRARHVIINVGGCRVRLAWAALARCPLARLERLRACRGHDDLLRVCDDYDVSRDEFFFDRSPCAFRAIVALLRAGKLRLLRGPCALAFRDELAYWGIDEARLERCCLRRLRRREEEAAEARAGPTERGAQGSPARALGPRGRLQRGRRRLRDVVDNPHSGLAGKLFACVSVSFVAVTAVGLCLSTMPDIRAEEERGECSPKCRSLFVLETVCVAWFSFEFLLRSLQAESKCAFLRAPLNIIDILALLPFYVSLLLGLAAGPGGTKLLERAGLVLRLLRALRVLYVMRLARHSLGLRSLGLTMRRCAREFGLLLLFLCVAMALFAPLVHLAERELGARRDFSSVPASYWWAVISMTTVGYGDMVPRSLPGQVVALSSILSGILLMAFPVTSIFHTFSRSYSELKEQQQRAASPEPALQEDSTHSATATEDSSQGPDSAGLADDSADALWVRAGR</sequence>
<gene>
    <name evidence="8" type="primary">KCNG2</name>
    <name evidence="5" type="synonym">KCNF2</name>
</gene>